<protein>
    <recommendedName>
        <fullName evidence="1">Small ribosomal subunit protein uS10</fullName>
    </recommendedName>
    <alternativeName>
        <fullName evidence="2">30S ribosomal protein S10</fullName>
    </alternativeName>
</protein>
<comment type="function">
    <text evidence="1">Involved in the binding of tRNA to the ribosomes.</text>
</comment>
<comment type="subunit">
    <text evidence="1">Part of the 30S ribosomal subunit.</text>
</comment>
<comment type="similarity">
    <text evidence="1">Belongs to the universal ribosomal protein uS10 family.</text>
</comment>
<gene>
    <name evidence="1" type="primary">rpsJ</name>
    <name type="ordered locus">VV1_0763</name>
</gene>
<proteinExistence type="inferred from homology"/>
<dbReference type="EMBL" id="AE016795">
    <property type="protein sequence ID" value="AAO09271.1"/>
    <property type="molecule type" value="Genomic_DNA"/>
</dbReference>
<dbReference type="RefSeq" id="WP_004410492.1">
    <property type="nucleotide sequence ID" value="NC_004459.3"/>
</dbReference>
<dbReference type="SMR" id="P66347"/>
<dbReference type="GeneID" id="97171180"/>
<dbReference type="KEGG" id="vvu:VV1_0763"/>
<dbReference type="HOGENOM" id="CLU_122625_1_3_6"/>
<dbReference type="Proteomes" id="UP000002275">
    <property type="component" value="Chromosome 1"/>
</dbReference>
<dbReference type="GO" id="GO:1990904">
    <property type="term" value="C:ribonucleoprotein complex"/>
    <property type="evidence" value="ECO:0007669"/>
    <property type="project" value="UniProtKB-KW"/>
</dbReference>
<dbReference type="GO" id="GO:0005840">
    <property type="term" value="C:ribosome"/>
    <property type="evidence" value="ECO:0007669"/>
    <property type="project" value="UniProtKB-KW"/>
</dbReference>
<dbReference type="GO" id="GO:0003735">
    <property type="term" value="F:structural constituent of ribosome"/>
    <property type="evidence" value="ECO:0007669"/>
    <property type="project" value="InterPro"/>
</dbReference>
<dbReference type="GO" id="GO:0000049">
    <property type="term" value="F:tRNA binding"/>
    <property type="evidence" value="ECO:0007669"/>
    <property type="project" value="UniProtKB-UniRule"/>
</dbReference>
<dbReference type="GO" id="GO:0006412">
    <property type="term" value="P:translation"/>
    <property type="evidence" value="ECO:0007669"/>
    <property type="project" value="UniProtKB-UniRule"/>
</dbReference>
<dbReference type="FunFam" id="3.30.70.600:FF:000001">
    <property type="entry name" value="30S ribosomal protein S10"/>
    <property type="match status" value="1"/>
</dbReference>
<dbReference type="Gene3D" id="3.30.70.600">
    <property type="entry name" value="Ribosomal protein S10 domain"/>
    <property type="match status" value="1"/>
</dbReference>
<dbReference type="HAMAP" id="MF_00508">
    <property type="entry name" value="Ribosomal_uS10"/>
    <property type="match status" value="1"/>
</dbReference>
<dbReference type="InterPro" id="IPR001848">
    <property type="entry name" value="Ribosomal_uS10"/>
</dbReference>
<dbReference type="InterPro" id="IPR018268">
    <property type="entry name" value="Ribosomal_uS10_CS"/>
</dbReference>
<dbReference type="InterPro" id="IPR027486">
    <property type="entry name" value="Ribosomal_uS10_dom"/>
</dbReference>
<dbReference type="InterPro" id="IPR036838">
    <property type="entry name" value="Ribosomal_uS10_dom_sf"/>
</dbReference>
<dbReference type="NCBIfam" id="NF001861">
    <property type="entry name" value="PRK00596.1"/>
    <property type="match status" value="1"/>
</dbReference>
<dbReference type="NCBIfam" id="TIGR01049">
    <property type="entry name" value="rpsJ_bact"/>
    <property type="match status" value="1"/>
</dbReference>
<dbReference type="PANTHER" id="PTHR11700">
    <property type="entry name" value="30S RIBOSOMAL PROTEIN S10 FAMILY MEMBER"/>
    <property type="match status" value="1"/>
</dbReference>
<dbReference type="Pfam" id="PF00338">
    <property type="entry name" value="Ribosomal_S10"/>
    <property type="match status" value="1"/>
</dbReference>
<dbReference type="PRINTS" id="PR00971">
    <property type="entry name" value="RIBOSOMALS10"/>
</dbReference>
<dbReference type="SMART" id="SM01403">
    <property type="entry name" value="Ribosomal_S10"/>
    <property type="match status" value="1"/>
</dbReference>
<dbReference type="SUPFAM" id="SSF54999">
    <property type="entry name" value="Ribosomal protein S10"/>
    <property type="match status" value="1"/>
</dbReference>
<dbReference type="PROSITE" id="PS00361">
    <property type="entry name" value="RIBOSOMAL_S10"/>
    <property type="match status" value="1"/>
</dbReference>
<evidence type="ECO:0000255" key="1">
    <source>
        <dbReference type="HAMAP-Rule" id="MF_00508"/>
    </source>
</evidence>
<evidence type="ECO:0000305" key="2"/>
<accession>P66347</accession>
<accession>Q87T14</accession>
<accession>Q8DE38</accession>
<sequence length="103" mass="11721">MQNQRIRIRLKAFDYKLIDASTAEIVETAKRTGAQVRGPIPLPTRKERFTVLISPHVNKKARDQYEIRTHKRLIDIVEPTDKTVDALMRLDLAAGVDVQISLG</sequence>
<keyword id="KW-0687">Ribonucleoprotein</keyword>
<keyword id="KW-0689">Ribosomal protein</keyword>
<name>RS10_VIBVU</name>
<reference key="1">
    <citation type="submission" date="2002-12" db="EMBL/GenBank/DDBJ databases">
        <title>Complete genome sequence of Vibrio vulnificus CMCP6.</title>
        <authorList>
            <person name="Rhee J.H."/>
            <person name="Kim S.Y."/>
            <person name="Chung S.S."/>
            <person name="Kim J.J."/>
            <person name="Moon Y.H."/>
            <person name="Jeong H."/>
            <person name="Choy H.E."/>
        </authorList>
    </citation>
    <scope>NUCLEOTIDE SEQUENCE [LARGE SCALE GENOMIC DNA]</scope>
    <source>
        <strain>CMCP6</strain>
    </source>
</reference>
<organism>
    <name type="scientific">Vibrio vulnificus (strain CMCP6)</name>
    <dbReference type="NCBI Taxonomy" id="216895"/>
    <lineage>
        <taxon>Bacteria</taxon>
        <taxon>Pseudomonadati</taxon>
        <taxon>Pseudomonadota</taxon>
        <taxon>Gammaproteobacteria</taxon>
        <taxon>Vibrionales</taxon>
        <taxon>Vibrionaceae</taxon>
        <taxon>Vibrio</taxon>
    </lineage>
</organism>
<feature type="chain" id="PRO_0000146631" description="Small ribosomal subunit protein uS10">
    <location>
        <begin position="1"/>
        <end position="103"/>
    </location>
</feature>